<protein>
    <recommendedName>
        <fullName evidence="1">Nucleoside diphosphate kinase</fullName>
        <shortName evidence="1">NDK</shortName>
        <shortName evidence="1">NDP kinase</shortName>
        <ecNumber evidence="1">2.7.4.6</ecNumber>
    </recommendedName>
    <alternativeName>
        <fullName evidence="1">Nucleoside-2-P kinase</fullName>
    </alternativeName>
</protein>
<name>NDK_NITV9</name>
<proteinExistence type="inferred from homology"/>
<comment type="function">
    <text evidence="1">Major role in the synthesis of nucleoside triphosphates other than ATP. The ATP gamma phosphate is transferred to the NDP beta phosphate via a ping-pong mechanism, using a phosphorylated active-site intermediate.</text>
</comment>
<comment type="catalytic activity">
    <reaction evidence="1">
        <text>a 2'-deoxyribonucleoside 5'-diphosphate + ATP = a 2'-deoxyribonucleoside 5'-triphosphate + ADP</text>
        <dbReference type="Rhea" id="RHEA:44640"/>
        <dbReference type="ChEBI" id="CHEBI:30616"/>
        <dbReference type="ChEBI" id="CHEBI:61560"/>
        <dbReference type="ChEBI" id="CHEBI:73316"/>
        <dbReference type="ChEBI" id="CHEBI:456216"/>
        <dbReference type="EC" id="2.7.4.6"/>
    </reaction>
</comment>
<comment type="catalytic activity">
    <reaction evidence="1">
        <text>a ribonucleoside 5'-diphosphate + ATP = a ribonucleoside 5'-triphosphate + ADP</text>
        <dbReference type="Rhea" id="RHEA:18113"/>
        <dbReference type="ChEBI" id="CHEBI:30616"/>
        <dbReference type="ChEBI" id="CHEBI:57930"/>
        <dbReference type="ChEBI" id="CHEBI:61557"/>
        <dbReference type="ChEBI" id="CHEBI:456216"/>
        <dbReference type="EC" id="2.7.4.6"/>
    </reaction>
</comment>
<comment type="cofactor">
    <cofactor evidence="1">
        <name>Mg(2+)</name>
        <dbReference type="ChEBI" id="CHEBI:18420"/>
    </cofactor>
</comment>
<comment type="subunit">
    <text evidence="1">Homotetramer.</text>
</comment>
<comment type="subcellular location">
    <subcellularLocation>
        <location evidence="1">Cytoplasm</location>
    </subcellularLocation>
</comment>
<comment type="similarity">
    <text evidence="1">Belongs to the NDK family.</text>
</comment>
<keyword id="KW-0067">ATP-binding</keyword>
<keyword id="KW-0963">Cytoplasm</keyword>
<keyword id="KW-0418">Kinase</keyword>
<keyword id="KW-0460">Magnesium</keyword>
<keyword id="KW-0479">Metal-binding</keyword>
<keyword id="KW-0546">Nucleotide metabolism</keyword>
<keyword id="KW-0547">Nucleotide-binding</keyword>
<keyword id="KW-0597">Phosphoprotein</keyword>
<keyword id="KW-0808">Transferase</keyword>
<accession>B8DNF4</accession>
<sequence>MAERTFSIIKPDAVERNLSGAILKMIQDSGLKVVAMKMIHLTRSQAEGFYAVHRERPFFDSLVTYMCSGPVVCSVLEGDNAIQRYRDLMGATNPANAAEGTIRKTYAVSIEANSVHGSDAPETAAYEIAYFFNALEMVG</sequence>
<gene>
    <name evidence="1" type="primary">ndk</name>
    <name type="ordered locus">DvMF_3160</name>
</gene>
<organism>
    <name type="scientific">Nitratidesulfovibrio vulgaris (strain DSM 19637 / Miyazaki F)</name>
    <name type="common">Desulfovibrio vulgaris</name>
    <dbReference type="NCBI Taxonomy" id="883"/>
    <lineage>
        <taxon>Bacteria</taxon>
        <taxon>Pseudomonadati</taxon>
        <taxon>Thermodesulfobacteriota</taxon>
        <taxon>Desulfovibrionia</taxon>
        <taxon>Desulfovibrionales</taxon>
        <taxon>Desulfovibrionaceae</taxon>
        <taxon>Nitratidesulfovibrio</taxon>
    </lineage>
</organism>
<reference key="1">
    <citation type="submission" date="2008-10" db="EMBL/GenBank/DDBJ databases">
        <title>Complete sequence of Desulfovibrio vulgaris str. 'Miyazaki F'.</title>
        <authorList>
            <person name="Lucas S."/>
            <person name="Copeland A."/>
            <person name="Lapidus A."/>
            <person name="Glavina del Rio T."/>
            <person name="Dalin E."/>
            <person name="Tice H."/>
            <person name="Bruce D."/>
            <person name="Goodwin L."/>
            <person name="Pitluck S."/>
            <person name="Sims D."/>
            <person name="Brettin T."/>
            <person name="Detter J.C."/>
            <person name="Han C."/>
            <person name="Larimer F."/>
            <person name="Land M."/>
            <person name="Hauser L."/>
            <person name="Kyrpides N."/>
            <person name="Mikhailova N."/>
            <person name="Hazen T.C."/>
            <person name="Richardson P."/>
        </authorList>
    </citation>
    <scope>NUCLEOTIDE SEQUENCE [LARGE SCALE GENOMIC DNA]</scope>
    <source>
        <strain>DSM 19637 / Miyazaki F</strain>
    </source>
</reference>
<feature type="chain" id="PRO_1000124955" description="Nucleoside diphosphate kinase">
    <location>
        <begin position="1"/>
        <end position="139"/>
    </location>
</feature>
<feature type="active site" description="Pros-phosphohistidine intermediate" evidence="1">
    <location>
        <position position="116"/>
    </location>
</feature>
<feature type="binding site" evidence="1">
    <location>
        <position position="10"/>
    </location>
    <ligand>
        <name>ATP</name>
        <dbReference type="ChEBI" id="CHEBI:30616"/>
    </ligand>
</feature>
<feature type="binding site" evidence="1">
    <location>
        <position position="58"/>
    </location>
    <ligand>
        <name>ATP</name>
        <dbReference type="ChEBI" id="CHEBI:30616"/>
    </ligand>
</feature>
<feature type="binding site" evidence="1">
    <location>
        <position position="86"/>
    </location>
    <ligand>
        <name>ATP</name>
        <dbReference type="ChEBI" id="CHEBI:30616"/>
    </ligand>
</feature>
<feature type="binding site" evidence="1">
    <location>
        <position position="92"/>
    </location>
    <ligand>
        <name>ATP</name>
        <dbReference type="ChEBI" id="CHEBI:30616"/>
    </ligand>
</feature>
<feature type="binding site" evidence="1">
    <location>
        <position position="103"/>
    </location>
    <ligand>
        <name>ATP</name>
        <dbReference type="ChEBI" id="CHEBI:30616"/>
    </ligand>
</feature>
<feature type="binding site" evidence="1">
    <location>
        <position position="113"/>
    </location>
    <ligand>
        <name>ATP</name>
        <dbReference type="ChEBI" id="CHEBI:30616"/>
    </ligand>
</feature>
<dbReference type="EC" id="2.7.4.6" evidence="1"/>
<dbReference type="EMBL" id="CP001197">
    <property type="protein sequence ID" value="ACL10096.1"/>
    <property type="molecule type" value="Genomic_DNA"/>
</dbReference>
<dbReference type="SMR" id="B8DNF4"/>
<dbReference type="STRING" id="883.DvMF_3160"/>
<dbReference type="KEGG" id="dvm:DvMF_3160"/>
<dbReference type="eggNOG" id="COG0105">
    <property type="taxonomic scope" value="Bacteria"/>
</dbReference>
<dbReference type="HOGENOM" id="CLU_060216_8_1_7"/>
<dbReference type="OrthoDB" id="9801161at2"/>
<dbReference type="GO" id="GO:0005737">
    <property type="term" value="C:cytoplasm"/>
    <property type="evidence" value="ECO:0007669"/>
    <property type="project" value="UniProtKB-SubCell"/>
</dbReference>
<dbReference type="GO" id="GO:0005524">
    <property type="term" value="F:ATP binding"/>
    <property type="evidence" value="ECO:0007669"/>
    <property type="project" value="UniProtKB-UniRule"/>
</dbReference>
<dbReference type="GO" id="GO:0046872">
    <property type="term" value="F:metal ion binding"/>
    <property type="evidence" value="ECO:0007669"/>
    <property type="project" value="UniProtKB-KW"/>
</dbReference>
<dbReference type="GO" id="GO:0004550">
    <property type="term" value="F:nucleoside diphosphate kinase activity"/>
    <property type="evidence" value="ECO:0007669"/>
    <property type="project" value="UniProtKB-UniRule"/>
</dbReference>
<dbReference type="GO" id="GO:0006241">
    <property type="term" value="P:CTP biosynthetic process"/>
    <property type="evidence" value="ECO:0007669"/>
    <property type="project" value="UniProtKB-UniRule"/>
</dbReference>
<dbReference type="GO" id="GO:0006183">
    <property type="term" value="P:GTP biosynthetic process"/>
    <property type="evidence" value="ECO:0007669"/>
    <property type="project" value="UniProtKB-UniRule"/>
</dbReference>
<dbReference type="GO" id="GO:0006228">
    <property type="term" value="P:UTP biosynthetic process"/>
    <property type="evidence" value="ECO:0007669"/>
    <property type="project" value="UniProtKB-UniRule"/>
</dbReference>
<dbReference type="CDD" id="cd04413">
    <property type="entry name" value="NDPk_I"/>
    <property type="match status" value="1"/>
</dbReference>
<dbReference type="FunFam" id="3.30.70.141:FF:000001">
    <property type="entry name" value="Nucleoside diphosphate kinase"/>
    <property type="match status" value="1"/>
</dbReference>
<dbReference type="Gene3D" id="3.30.70.141">
    <property type="entry name" value="Nucleoside diphosphate kinase-like domain"/>
    <property type="match status" value="1"/>
</dbReference>
<dbReference type="HAMAP" id="MF_00451">
    <property type="entry name" value="NDP_kinase"/>
    <property type="match status" value="1"/>
</dbReference>
<dbReference type="InterPro" id="IPR034907">
    <property type="entry name" value="NDK-like_dom"/>
</dbReference>
<dbReference type="InterPro" id="IPR036850">
    <property type="entry name" value="NDK-like_dom_sf"/>
</dbReference>
<dbReference type="InterPro" id="IPR001564">
    <property type="entry name" value="Nucleoside_diP_kinase"/>
</dbReference>
<dbReference type="InterPro" id="IPR023005">
    <property type="entry name" value="Nucleoside_diP_kinase_AS"/>
</dbReference>
<dbReference type="NCBIfam" id="NF001908">
    <property type="entry name" value="PRK00668.1"/>
    <property type="match status" value="1"/>
</dbReference>
<dbReference type="PANTHER" id="PTHR46161">
    <property type="entry name" value="NUCLEOSIDE DIPHOSPHATE KINASE"/>
    <property type="match status" value="1"/>
</dbReference>
<dbReference type="PANTHER" id="PTHR46161:SF3">
    <property type="entry name" value="NUCLEOSIDE DIPHOSPHATE KINASE DDB_G0292928-RELATED"/>
    <property type="match status" value="1"/>
</dbReference>
<dbReference type="Pfam" id="PF00334">
    <property type="entry name" value="NDK"/>
    <property type="match status" value="1"/>
</dbReference>
<dbReference type="PRINTS" id="PR01243">
    <property type="entry name" value="NUCDPKINASE"/>
</dbReference>
<dbReference type="SMART" id="SM00562">
    <property type="entry name" value="NDK"/>
    <property type="match status" value="1"/>
</dbReference>
<dbReference type="SUPFAM" id="SSF54919">
    <property type="entry name" value="Nucleoside diphosphate kinase, NDK"/>
    <property type="match status" value="1"/>
</dbReference>
<dbReference type="PROSITE" id="PS00469">
    <property type="entry name" value="NDPK"/>
    <property type="match status" value="1"/>
</dbReference>
<dbReference type="PROSITE" id="PS51374">
    <property type="entry name" value="NDPK_LIKE"/>
    <property type="match status" value="1"/>
</dbReference>
<evidence type="ECO:0000255" key="1">
    <source>
        <dbReference type="HAMAP-Rule" id="MF_00451"/>
    </source>
</evidence>